<proteinExistence type="inferred from homology"/>
<feature type="chain" id="PRO_1000048856" description="tRNA modification GTPase MnmE">
    <location>
        <begin position="1"/>
        <end position="456"/>
    </location>
</feature>
<feature type="domain" description="TrmE-type G">
    <location>
        <begin position="216"/>
        <end position="379"/>
    </location>
</feature>
<feature type="binding site" evidence="1">
    <location>
        <position position="24"/>
    </location>
    <ligand>
        <name>(6S)-5-formyl-5,6,7,8-tetrahydrofolate</name>
        <dbReference type="ChEBI" id="CHEBI:57457"/>
    </ligand>
</feature>
<feature type="binding site" evidence="1">
    <location>
        <position position="81"/>
    </location>
    <ligand>
        <name>(6S)-5-formyl-5,6,7,8-tetrahydrofolate</name>
        <dbReference type="ChEBI" id="CHEBI:57457"/>
    </ligand>
</feature>
<feature type="binding site" evidence="1">
    <location>
        <position position="120"/>
    </location>
    <ligand>
        <name>(6S)-5-formyl-5,6,7,8-tetrahydrofolate</name>
        <dbReference type="ChEBI" id="CHEBI:57457"/>
    </ligand>
</feature>
<feature type="binding site" evidence="1">
    <location>
        <begin position="226"/>
        <end position="231"/>
    </location>
    <ligand>
        <name>GTP</name>
        <dbReference type="ChEBI" id="CHEBI:37565"/>
    </ligand>
</feature>
<feature type="binding site" evidence="1">
    <location>
        <position position="226"/>
    </location>
    <ligand>
        <name>K(+)</name>
        <dbReference type="ChEBI" id="CHEBI:29103"/>
    </ligand>
</feature>
<feature type="binding site" evidence="1">
    <location>
        <position position="230"/>
    </location>
    <ligand>
        <name>Mg(2+)</name>
        <dbReference type="ChEBI" id="CHEBI:18420"/>
    </ligand>
</feature>
<feature type="binding site" evidence="1">
    <location>
        <begin position="245"/>
        <end position="251"/>
    </location>
    <ligand>
        <name>GTP</name>
        <dbReference type="ChEBI" id="CHEBI:37565"/>
    </ligand>
</feature>
<feature type="binding site" evidence="1">
    <location>
        <position position="245"/>
    </location>
    <ligand>
        <name>K(+)</name>
        <dbReference type="ChEBI" id="CHEBI:29103"/>
    </ligand>
</feature>
<feature type="binding site" evidence="1">
    <location>
        <position position="247"/>
    </location>
    <ligand>
        <name>K(+)</name>
        <dbReference type="ChEBI" id="CHEBI:29103"/>
    </ligand>
</feature>
<feature type="binding site" evidence="1">
    <location>
        <position position="250"/>
    </location>
    <ligand>
        <name>K(+)</name>
        <dbReference type="ChEBI" id="CHEBI:29103"/>
    </ligand>
</feature>
<feature type="binding site" evidence="1">
    <location>
        <position position="251"/>
    </location>
    <ligand>
        <name>Mg(2+)</name>
        <dbReference type="ChEBI" id="CHEBI:18420"/>
    </ligand>
</feature>
<feature type="binding site" evidence="1">
    <location>
        <begin position="270"/>
        <end position="273"/>
    </location>
    <ligand>
        <name>GTP</name>
        <dbReference type="ChEBI" id="CHEBI:37565"/>
    </ligand>
</feature>
<feature type="binding site" evidence="1">
    <location>
        <begin position="335"/>
        <end position="338"/>
    </location>
    <ligand>
        <name>GTP</name>
        <dbReference type="ChEBI" id="CHEBI:37565"/>
    </ligand>
</feature>
<feature type="binding site" evidence="1">
    <location>
        <position position="456"/>
    </location>
    <ligand>
        <name>(6S)-5-formyl-5,6,7,8-tetrahydrofolate</name>
        <dbReference type="ChEBI" id="CHEBI:57457"/>
    </ligand>
</feature>
<sequence>MNVPRETIAAIATAQGRGGVGIVRISGPLAGAAAKAISGRELKPRFAHYGPFLSEQEEVLDEGIVLYFPGPNSFTGEDVLELQGHGGPIVLDMLLQRCLELGCRLARPGEFSERAFLNDKLDLAQAEAIADLIEASSAQAARNALRSLQGAFSQRVYNLTEQLIALRIYVEAAIDFPEEEIDFLADGHVLSMLDAVRDELSTVLREAGQGALLRDGMTVVIAGRPNAGKSSLLNALAGREAAIVTDIAGTTRDILREHIHIDGMPLHVVDTAGLRDTEDQVEKIGVERALKAISEADRVLLVVDATAAEAADPFALWPEFLEQRPDPAKVTLIRNKADLTGEPIALETCDDGHVTISLSAMAAGSGLELLRDHLKACMGYEQTSESSFSARRRHLEALHYASAALEHGRAQLTLAGAGELLAEDLRQAQQSLGEITGAFSSDDLLGRIFSSFCIGK</sequence>
<protein>
    <recommendedName>
        <fullName evidence="1">tRNA modification GTPase MnmE</fullName>
        <ecNumber evidence="1">3.6.-.-</ecNumber>
    </recommendedName>
</protein>
<keyword id="KW-0963">Cytoplasm</keyword>
<keyword id="KW-0342">GTP-binding</keyword>
<keyword id="KW-0378">Hydrolase</keyword>
<keyword id="KW-0460">Magnesium</keyword>
<keyword id="KW-0479">Metal-binding</keyword>
<keyword id="KW-0547">Nucleotide-binding</keyword>
<keyword id="KW-0630">Potassium</keyword>
<keyword id="KW-0819">tRNA processing</keyword>
<gene>
    <name evidence="1" type="primary">mnmE</name>
    <name evidence="1" type="synonym">trmE</name>
    <name type="ordered locus">PFL_6229</name>
</gene>
<organism>
    <name type="scientific">Pseudomonas fluorescens (strain ATCC BAA-477 / NRRL B-23932 / Pf-5)</name>
    <dbReference type="NCBI Taxonomy" id="220664"/>
    <lineage>
        <taxon>Bacteria</taxon>
        <taxon>Pseudomonadati</taxon>
        <taxon>Pseudomonadota</taxon>
        <taxon>Gammaproteobacteria</taxon>
        <taxon>Pseudomonadales</taxon>
        <taxon>Pseudomonadaceae</taxon>
        <taxon>Pseudomonas</taxon>
    </lineage>
</organism>
<dbReference type="EC" id="3.6.-.-" evidence="1"/>
<dbReference type="EMBL" id="CP000076">
    <property type="protein sequence ID" value="AAY95417.1"/>
    <property type="molecule type" value="Genomic_DNA"/>
</dbReference>
<dbReference type="RefSeq" id="WP_011064393.1">
    <property type="nucleotide sequence ID" value="NC_004129.6"/>
</dbReference>
<dbReference type="SMR" id="Q4K396"/>
<dbReference type="STRING" id="220664.PFL_6229"/>
<dbReference type="KEGG" id="pfl:PFL_6229"/>
<dbReference type="PATRIC" id="fig|220664.5.peg.6360"/>
<dbReference type="eggNOG" id="COG0486">
    <property type="taxonomic scope" value="Bacteria"/>
</dbReference>
<dbReference type="HOGENOM" id="CLU_019624_4_1_6"/>
<dbReference type="Proteomes" id="UP000008540">
    <property type="component" value="Chromosome"/>
</dbReference>
<dbReference type="GO" id="GO:0005829">
    <property type="term" value="C:cytosol"/>
    <property type="evidence" value="ECO:0007669"/>
    <property type="project" value="TreeGrafter"/>
</dbReference>
<dbReference type="GO" id="GO:0005525">
    <property type="term" value="F:GTP binding"/>
    <property type="evidence" value="ECO:0007669"/>
    <property type="project" value="UniProtKB-UniRule"/>
</dbReference>
<dbReference type="GO" id="GO:0003924">
    <property type="term" value="F:GTPase activity"/>
    <property type="evidence" value="ECO:0007669"/>
    <property type="project" value="UniProtKB-UniRule"/>
</dbReference>
<dbReference type="GO" id="GO:0046872">
    <property type="term" value="F:metal ion binding"/>
    <property type="evidence" value="ECO:0007669"/>
    <property type="project" value="UniProtKB-KW"/>
</dbReference>
<dbReference type="GO" id="GO:0030488">
    <property type="term" value="P:tRNA methylation"/>
    <property type="evidence" value="ECO:0007669"/>
    <property type="project" value="TreeGrafter"/>
</dbReference>
<dbReference type="GO" id="GO:0002098">
    <property type="term" value="P:tRNA wobble uridine modification"/>
    <property type="evidence" value="ECO:0007669"/>
    <property type="project" value="TreeGrafter"/>
</dbReference>
<dbReference type="CDD" id="cd04164">
    <property type="entry name" value="trmE"/>
    <property type="match status" value="1"/>
</dbReference>
<dbReference type="CDD" id="cd14858">
    <property type="entry name" value="TrmE_N"/>
    <property type="match status" value="1"/>
</dbReference>
<dbReference type="FunFam" id="3.30.1360.120:FF:000001">
    <property type="entry name" value="tRNA modification GTPase MnmE"/>
    <property type="match status" value="1"/>
</dbReference>
<dbReference type="FunFam" id="3.40.50.300:FF:000249">
    <property type="entry name" value="tRNA modification GTPase MnmE"/>
    <property type="match status" value="1"/>
</dbReference>
<dbReference type="Gene3D" id="3.40.50.300">
    <property type="entry name" value="P-loop containing nucleotide triphosphate hydrolases"/>
    <property type="match status" value="1"/>
</dbReference>
<dbReference type="Gene3D" id="3.30.1360.120">
    <property type="entry name" value="Probable tRNA modification gtpase trme, domain 1"/>
    <property type="match status" value="1"/>
</dbReference>
<dbReference type="Gene3D" id="1.20.120.430">
    <property type="entry name" value="tRNA modification GTPase MnmE domain 2"/>
    <property type="match status" value="1"/>
</dbReference>
<dbReference type="HAMAP" id="MF_00379">
    <property type="entry name" value="GTPase_MnmE"/>
    <property type="match status" value="1"/>
</dbReference>
<dbReference type="InterPro" id="IPR031168">
    <property type="entry name" value="G_TrmE"/>
</dbReference>
<dbReference type="InterPro" id="IPR006073">
    <property type="entry name" value="GTP-bd"/>
</dbReference>
<dbReference type="InterPro" id="IPR018948">
    <property type="entry name" value="GTP-bd_TrmE_N"/>
</dbReference>
<dbReference type="InterPro" id="IPR004520">
    <property type="entry name" value="GTPase_MnmE"/>
</dbReference>
<dbReference type="InterPro" id="IPR027368">
    <property type="entry name" value="MnmE_dom2"/>
</dbReference>
<dbReference type="InterPro" id="IPR025867">
    <property type="entry name" value="MnmE_helical"/>
</dbReference>
<dbReference type="InterPro" id="IPR027417">
    <property type="entry name" value="P-loop_NTPase"/>
</dbReference>
<dbReference type="InterPro" id="IPR005225">
    <property type="entry name" value="Small_GTP-bd"/>
</dbReference>
<dbReference type="InterPro" id="IPR027266">
    <property type="entry name" value="TrmE/GcvT_dom1"/>
</dbReference>
<dbReference type="NCBIfam" id="TIGR00450">
    <property type="entry name" value="mnmE_trmE_thdF"/>
    <property type="match status" value="1"/>
</dbReference>
<dbReference type="NCBIfam" id="NF003661">
    <property type="entry name" value="PRK05291.1-3"/>
    <property type="match status" value="1"/>
</dbReference>
<dbReference type="NCBIfam" id="TIGR00231">
    <property type="entry name" value="small_GTP"/>
    <property type="match status" value="1"/>
</dbReference>
<dbReference type="PANTHER" id="PTHR42714">
    <property type="entry name" value="TRNA MODIFICATION GTPASE GTPBP3"/>
    <property type="match status" value="1"/>
</dbReference>
<dbReference type="PANTHER" id="PTHR42714:SF2">
    <property type="entry name" value="TRNA MODIFICATION GTPASE GTPBP3, MITOCHONDRIAL"/>
    <property type="match status" value="1"/>
</dbReference>
<dbReference type="Pfam" id="PF01926">
    <property type="entry name" value="MMR_HSR1"/>
    <property type="match status" value="1"/>
</dbReference>
<dbReference type="Pfam" id="PF12631">
    <property type="entry name" value="MnmE_helical"/>
    <property type="match status" value="1"/>
</dbReference>
<dbReference type="Pfam" id="PF10396">
    <property type="entry name" value="TrmE_N"/>
    <property type="match status" value="1"/>
</dbReference>
<dbReference type="PRINTS" id="PR00326">
    <property type="entry name" value="GTP1OBG"/>
</dbReference>
<dbReference type="SUPFAM" id="SSF52540">
    <property type="entry name" value="P-loop containing nucleoside triphosphate hydrolases"/>
    <property type="match status" value="1"/>
</dbReference>
<dbReference type="SUPFAM" id="SSF116878">
    <property type="entry name" value="TrmE connector domain"/>
    <property type="match status" value="1"/>
</dbReference>
<dbReference type="PROSITE" id="PS51709">
    <property type="entry name" value="G_TRME"/>
    <property type="match status" value="1"/>
</dbReference>
<name>MNME_PSEF5</name>
<evidence type="ECO:0000255" key="1">
    <source>
        <dbReference type="HAMAP-Rule" id="MF_00379"/>
    </source>
</evidence>
<comment type="function">
    <text evidence="1">Exhibits a very high intrinsic GTPase hydrolysis rate. Involved in the addition of a carboxymethylaminomethyl (cmnm) group at the wobble position (U34) of certain tRNAs, forming tRNA-cmnm(5)s(2)U34.</text>
</comment>
<comment type="cofactor">
    <cofactor evidence="1">
        <name>K(+)</name>
        <dbReference type="ChEBI" id="CHEBI:29103"/>
    </cofactor>
    <text evidence="1">Binds 1 potassium ion per subunit.</text>
</comment>
<comment type="subunit">
    <text evidence="1">Homodimer. Heterotetramer of two MnmE and two MnmG subunits.</text>
</comment>
<comment type="subcellular location">
    <subcellularLocation>
        <location evidence="1">Cytoplasm</location>
    </subcellularLocation>
</comment>
<comment type="similarity">
    <text evidence="1">Belongs to the TRAFAC class TrmE-Era-EngA-EngB-Septin-like GTPase superfamily. TrmE GTPase family.</text>
</comment>
<accession>Q4K396</accession>
<reference key="1">
    <citation type="journal article" date="2005" name="Nat. Biotechnol.">
        <title>Complete genome sequence of the plant commensal Pseudomonas fluorescens Pf-5.</title>
        <authorList>
            <person name="Paulsen I.T."/>
            <person name="Press C.M."/>
            <person name="Ravel J."/>
            <person name="Kobayashi D.Y."/>
            <person name="Myers G.S.A."/>
            <person name="Mavrodi D.V."/>
            <person name="DeBoy R.T."/>
            <person name="Seshadri R."/>
            <person name="Ren Q."/>
            <person name="Madupu R."/>
            <person name="Dodson R.J."/>
            <person name="Durkin A.S."/>
            <person name="Brinkac L.M."/>
            <person name="Daugherty S.C."/>
            <person name="Sullivan S.A."/>
            <person name="Rosovitz M.J."/>
            <person name="Gwinn M.L."/>
            <person name="Zhou L."/>
            <person name="Schneider D.J."/>
            <person name="Cartinhour S.W."/>
            <person name="Nelson W.C."/>
            <person name="Weidman J."/>
            <person name="Watkins K."/>
            <person name="Tran K."/>
            <person name="Khouri H."/>
            <person name="Pierson E.A."/>
            <person name="Pierson L.S. III"/>
            <person name="Thomashow L.S."/>
            <person name="Loper J.E."/>
        </authorList>
    </citation>
    <scope>NUCLEOTIDE SEQUENCE [LARGE SCALE GENOMIC DNA]</scope>
    <source>
        <strain>ATCC BAA-477 / NRRL B-23932 / Pf-5</strain>
    </source>
</reference>